<name>CADC_LACLL</name>
<organism>
    <name type="scientific">Lactococcus lactis subsp. lactis</name>
    <name type="common">Streptococcus lactis</name>
    <dbReference type="NCBI Taxonomy" id="1360"/>
    <lineage>
        <taxon>Bacteria</taxon>
        <taxon>Bacillati</taxon>
        <taxon>Bacillota</taxon>
        <taxon>Bacilli</taxon>
        <taxon>Lactobacillales</taxon>
        <taxon>Streptococcaceae</taxon>
        <taxon>Lactococcus</taxon>
    </lineage>
</organism>
<accession>P0A4U3</accession>
<accession>P94887</accession>
<comment type="function">
    <text evidence="1">Metal-binding repressor for the cad operon. Involved in resistance to heavy metals, such as cadmium, bismuth, zinc or lead. Metal binding causes the repressor to dissociate from the DNA (By similarity).</text>
</comment>
<comment type="subunit">
    <text evidence="1">Homodimer.</text>
</comment>
<gene>
    <name type="primary">cadC</name>
</gene>
<proteinExistence type="inferred from homology"/>
<keyword id="KW-0104">Cadmium</keyword>
<keyword id="KW-0105">Cadmium resistance</keyword>
<keyword id="KW-0238">DNA-binding</keyword>
<keyword id="KW-0479">Metal-binding</keyword>
<keyword id="KW-0614">Plasmid</keyword>
<keyword id="KW-0804">Transcription</keyword>
<keyword id="KW-0805">Transcription regulation</keyword>
<evidence type="ECO:0000250" key="1"/>
<evidence type="ECO:0000255" key="2">
    <source>
        <dbReference type="PROSITE-ProRule" id="PRU00340"/>
    </source>
</evidence>
<dbReference type="EMBL" id="U78967">
    <property type="protein sequence ID" value="AAB37344.1"/>
    <property type="molecule type" value="Genomic_DNA"/>
</dbReference>
<dbReference type="EMBL" id="AF243383">
    <property type="protein sequence ID" value="AAF98301.1"/>
    <property type="molecule type" value="Genomic_DNA"/>
</dbReference>
<dbReference type="RefSeq" id="NP_862601.1">
    <property type="nucleotide sequence ID" value="NC_004966.1"/>
</dbReference>
<dbReference type="RefSeq" id="WP_003726380.1">
    <property type="nucleotide sequence ID" value="NZ_WJUU01000003.1"/>
</dbReference>
<dbReference type="RefSeq" id="YP_001174713.1">
    <property type="nucleotide sequence ID" value="NC_009435.1"/>
</dbReference>
<dbReference type="RefSeq" id="YP_001966470.1">
    <property type="nucleotide sequence ID" value="NC_010901.1"/>
</dbReference>
<dbReference type="RefSeq" id="YP_004761536.1">
    <property type="nucleotide sequence ID" value="NC_015863.1"/>
</dbReference>
<dbReference type="SMR" id="P0A4U3"/>
<dbReference type="GO" id="GO:0003677">
    <property type="term" value="F:DNA binding"/>
    <property type="evidence" value="ECO:0007669"/>
    <property type="project" value="UniProtKB-KW"/>
</dbReference>
<dbReference type="GO" id="GO:0003700">
    <property type="term" value="F:DNA-binding transcription factor activity"/>
    <property type="evidence" value="ECO:0007669"/>
    <property type="project" value="InterPro"/>
</dbReference>
<dbReference type="GO" id="GO:0046872">
    <property type="term" value="F:metal ion binding"/>
    <property type="evidence" value="ECO:0007669"/>
    <property type="project" value="UniProtKB-KW"/>
</dbReference>
<dbReference type="GO" id="GO:0046686">
    <property type="term" value="P:response to cadmium ion"/>
    <property type="evidence" value="ECO:0007669"/>
    <property type="project" value="UniProtKB-KW"/>
</dbReference>
<dbReference type="CDD" id="cd00090">
    <property type="entry name" value="HTH_ARSR"/>
    <property type="match status" value="1"/>
</dbReference>
<dbReference type="Gene3D" id="1.10.10.10">
    <property type="entry name" value="Winged helix-like DNA-binding domain superfamily/Winged helix DNA-binding domain"/>
    <property type="match status" value="1"/>
</dbReference>
<dbReference type="InterPro" id="IPR011991">
    <property type="entry name" value="ArsR-like_HTH"/>
</dbReference>
<dbReference type="InterPro" id="IPR018334">
    <property type="entry name" value="ArsR_HTH"/>
</dbReference>
<dbReference type="InterPro" id="IPR001845">
    <property type="entry name" value="HTH_ArsR_DNA-bd_dom"/>
</dbReference>
<dbReference type="InterPro" id="IPR051011">
    <property type="entry name" value="Metal_resp_trans_reg"/>
</dbReference>
<dbReference type="InterPro" id="IPR036388">
    <property type="entry name" value="WH-like_DNA-bd_sf"/>
</dbReference>
<dbReference type="InterPro" id="IPR036390">
    <property type="entry name" value="WH_DNA-bd_sf"/>
</dbReference>
<dbReference type="NCBIfam" id="NF033788">
    <property type="entry name" value="HTH_metalloreg"/>
    <property type="match status" value="1"/>
</dbReference>
<dbReference type="PANTHER" id="PTHR43132">
    <property type="entry name" value="ARSENICAL RESISTANCE OPERON REPRESSOR ARSR-RELATED"/>
    <property type="match status" value="1"/>
</dbReference>
<dbReference type="PANTHER" id="PTHR43132:SF6">
    <property type="entry name" value="HTH-TYPE TRANSCRIPTIONAL REPRESSOR CZRA"/>
    <property type="match status" value="1"/>
</dbReference>
<dbReference type="Pfam" id="PF01022">
    <property type="entry name" value="HTH_5"/>
    <property type="match status" value="1"/>
</dbReference>
<dbReference type="PRINTS" id="PR00778">
    <property type="entry name" value="HTHARSR"/>
</dbReference>
<dbReference type="SMART" id="SM00418">
    <property type="entry name" value="HTH_ARSR"/>
    <property type="match status" value="1"/>
</dbReference>
<dbReference type="SUPFAM" id="SSF46785">
    <property type="entry name" value="Winged helix' DNA-binding domain"/>
    <property type="match status" value="1"/>
</dbReference>
<dbReference type="PROSITE" id="PS00846">
    <property type="entry name" value="HTH_ARSR_1"/>
    <property type="match status" value="1"/>
</dbReference>
<dbReference type="PROSITE" id="PS50987">
    <property type="entry name" value="HTH_ARSR_2"/>
    <property type="match status" value="1"/>
</dbReference>
<sequence length="119" mass="13382">MNNEICEITCIHEDKVNRAKSKLANFDTPSVSGFFKILSDENRLKIVHALVHEDELCVCDIANIIDASVATTSHHLNSLKKLGVVDSHKDGKLVYYFIKNIKILNLMELGVNFKEEVLA</sequence>
<reference key="1">
    <citation type="journal article" date="1997" name="Plasmid">
        <title>Genetic analysis of regions involved in replication and cadmium resistance of the plasmid pND302 from Lactococcus lactis.</title>
        <authorList>
            <person name="Liu C.-Q."/>
            <person name="Khunajakr N."/>
            <person name="Chia L.G."/>
            <person name="Deng Y.-M."/>
            <person name="Charoenchai P."/>
            <person name="Dunn N.W."/>
        </authorList>
    </citation>
    <scope>NUCLEOTIDE SEQUENCE [GENOMIC DNA]</scope>
    <source>
        <strain>M71</strain>
        <plasmid>pND302</plasmid>
    </source>
</reference>
<reference key="2">
    <citation type="journal article" date="2000" name="Mol. Microbiol.">
        <title>Novel type I restriction specificities through domain shuffling of HsdS subunits in Lactococcus lactis.</title>
        <authorList>
            <person name="O'Sullivan D."/>
            <person name="Twomey D.P."/>
            <person name="Coffey A."/>
            <person name="Hill C."/>
            <person name="Fitzgerald G.F."/>
            <person name="Ross P.R."/>
        </authorList>
    </citation>
    <scope>NUCLEOTIDE SEQUENCE [GENOMIC DNA]</scope>
    <source>
        <strain>DPC220</strain>
        <plasmid>pAH82</plasmid>
    </source>
</reference>
<feature type="chain" id="PRO_0000160617" description="Cadmium resistance transcriptional regulatory protein CadC">
    <location>
        <begin position="1"/>
        <end position="119"/>
    </location>
</feature>
<feature type="domain" description="HTH arsR-type" evidence="2">
    <location>
        <begin position="23"/>
        <end position="118"/>
    </location>
</feature>
<feature type="DNA-binding region" description="H-T-H motif" evidence="2">
    <location>
        <begin position="58"/>
        <end position="77"/>
    </location>
</feature>
<feature type="binding site" evidence="2">
    <location>
        <position position="6"/>
    </location>
    <ligand>
        <name>Cd(2+)</name>
        <dbReference type="ChEBI" id="CHEBI:48775"/>
        <note>ligand shared between dimeric partners</note>
    </ligand>
</feature>
<feature type="binding site" evidence="2">
    <location>
        <position position="10"/>
    </location>
    <ligand>
        <name>Cd(2+)</name>
        <dbReference type="ChEBI" id="CHEBI:48775"/>
        <note>ligand shared between dimeric partners</note>
    </ligand>
</feature>
<feature type="binding site" evidence="2">
    <location>
        <position position="57"/>
    </location>
    <ligand>
        <name>Cd(2+)</name>
        <dbReference type="ChEBI" id="CHEBI:48775"/>
        <note>ligand shared between dimeric partners</note>
    </ligand>
</feature>
<feature type="binding site" evidence="2">
    <location>
        <position position="59"/>
    </location>
    <ligand>
        <name>Cd(2+)</name>
        <dbReference type="ChEBI" id="CHEBI:48775"/>
        <note>ligand shared between dimeric partners</note>
    </ligand>
</feature>
<geneLocation type="plasmid">
    <name>pND302</name>
</geneLocation>
<geneLocation type="plasmid">
    <name>pAH82</name>
</geneLocation>
<protein>
    <recommendedName>
        <fullName>Cadmium resistance transcriptional regulatory protein CadC</fullName>
    </recommendedName>
    <alternativeName>
        <fullName>Cadmium efflux system accessory protein</fullName>
    </alternativeName>
</protein>